<dbReference type="EMBL" id="KT868839">
    <property type="protein sequence ID" value="AOV80987.1"/>
    <property type="molecule type" value="Genomic_DNA"/>
</dbReference>
<dbReference type="SMR" id="A0A1I9QLC8"/>
<dbReference type="GO" id="GO:0005576">
    <property type="term" value="C:extracellular region"/>
    <property type="evidence" value="ECO:0007669"/>
    <property type="project" value="UniProtKB-KW"/>
</dbReference>
<dbReference type="GO" id="GO:0009277">
    <property type="term" value="C:fungal-type cell wall"/>
    <property type="evidence" value="ECO:0007669"/>
    <property type="project" value="InterPro"/>
</dbReference>
<dbReference type="GO" id="GO:0005199">
    <property type="term" value="F:structural constituent of cell wall"/>
    <property type="evidence" value="ECO:0007669"/>
    <property type="project" value="InterPro"/>
</dbReference>
<dbReference type="CDD" id="cd23507">
    <property type="entry name" value="hydrophobin_I"/>
    <property type="match status" value="1"/>
</dbReference>
<dbReference type="InterPro" id="IPR001338">
    <property type="entry name" value="Hydrophobin"/>
</dbReference>
<dbReference type="Pfam" id="PF01185">
    <property type="entry name" value="Hydrophobin"/>
    <property type="match status" value="1"/>
</dbReference>
<dbReference type="SMART" id="SM00075">
    <property type="entry name" value="HYDRO"/>
    <property type="match status" value="1"/>
</dbReference>
<protein>
    <recommendedName>
        <fullName evidence="5">Class I hydrophobin 7</fullName>
    </recommendedName>
</protein>
<comment type="function">
    <text evidence="6">Aerial growth, conidiation, and dispersal of filamentous fungi in the environment rely upon a capability of their secreting small amphipathic proteins called hydrophobins (HPBs) with low sequence identity. Class I can self-assemble into an outermost layer of rodlet bundles on aerial cell surfaces, conferring cellular hydrophobicity that supports fungal growth, development and dispersal; whereas Class II form highly ordered films at water-air interfaces through intermolecular interactions but contribute nothing to the rodlet structure.</text>
</comment>
<comment type="subunit">
    <text evidence="1">Self-assembles to form functional amyloid fibrils called rodlets. Self-assembly into fibrillar rodlets occurs spontaneously at hydrophobic:hydrophilic interfaces and the rodlets further associate laterally to form amphipathic monolayers.</text>
</comment>
<comment type="subcellular location">
    <subcellularLocation>
        <location evidence="1">Secreted</location>
    </subcellularLocation>
    <subcellularLocation>
        <location evidence="1">Secreted</location>
        <location evidence="1">Cell wall</location>
    </subcellularLocation>
</comment>
<comment type="developmental stage">
    <text evidence="4">Shows relatively higher levels of expression in the primordial stages and relatively low levels in the mycelial stage.</text>
</comment>
<comment type="induction">
    <text evidence="4">A CT-rich motif, which is often found immediately upstream of the transcription start point of highly expressed filamentous fungal genes, is present at the expected position.</text>
</comment>
<comment type="similarity">
    <text evidence="6">Belongs to the fungal hydrophobin family.</text>
</comment>
<sequence length="112" mass="11172">MFARQATSVSAFLVLTLSLFAAASPLGPAPPTTSQCNVGNQQCCNTVQDSSSAPAAALLGLLGVVLQDVDVLVCSPITVIGGLNSACDASPVCCENNSFGSLISVGCIPISL</sequence>
<gene>
    <name evidence="5" type="primary">Hyd-7</name>
</gene>
<evidence type="ECO:0000250" key="1">
    <source>
        <dbReference type="UniProtKB" id="Q04571"/>
    </source>
</evidence>
<evidence type="ECO:0000255" key="2"/>
<evidence type="ECO:0000255" key="3">
    <source>
        <dbReference type="PROSITE-ProRule" id="PRU00498"/>
    </source>
</evidence>
<evidence type="ECO:0000269" key="4">
    <source ref="1"/>
</evidence>
<evidence type="ECO:0000303" key="5">
    <source ref="1"/>
</evidence>
<evidence type="ECO:0000305" key="6"/>
<feature type="signal peptide" evidence="2">
    <location>
        <begin position="1"/>
        <end position="23"/>
    </location>
</feature>
<feature type="chain" id="PRO_5013984989" description="Class I hydrophobin 7">
    <location>
        <begin position="24"/>
        <end position="112"/>
    </location>
</feature>
<feature type="glycosylation site" description="N-linked (GlcNAc...) asparagine" evidence="3">
    <location>
        <position position="96"/>
    </location>
</feature>
<feature type="disulfide bond" evidence="1">
    <location>
        <begin position="36"/>
        <end position="93"/>
    </location>
</feature>
<feature type="disulfide bond" evidence="1">
    <location>
        <begin position="43"/>
        <end position="87"/>
    </location>
</feature>
<feature type="disulfide bond" evidence="1">
    <location>
        <begin position="44"/>
        <end position="74"/>
    </location>
</feature>
<feature type="disulfide bond" evidence="1">
    <location>
        <begin position="94"/>
        <end position="107"/>
    </location>
</feature>
<reference key="1">
    <citation type="journal article" date="2016" name="Mycoscience">
        <title>Further characterization of hydrophobin genes in genome of Flammulina velutipes.</title>
        <authorList>
            <person name="Kim H.-I."/>
            <person name="Lee C.-S."/>
            <person name="Park Y.-J."/>
        </authorList>
    </citation>
    <scope>NUCLEOTIDE SEQUENCE [GENOMIC DNA]</scope>
    <scope>DEVELOPMENTAL STAGE</scope>
    <scope>INDUCTION</scope>
</reference>
<name>HYD7_FLAVE</name>
<organism>
    <name type="scientific">Flammulina velutipes</name>
    <name type="common">Agaricus velutipes</name>
    <dbReference type="NCBI Taxonomy" id="38945"/>
    <lineage>
        <taxon>Eukaryota</taxon>
        <taxon>Fungi</taxon>
        <taxon>Dikarya</taxon>
        <taxon>Basidiomycota</taxon>
        <taxon>Agaricomycotina</taxon>
        <taxon>Agaricomycetes</taxon>
        <taxon>Agaricomycetidae</taxon>
        <taxon>Agaricales</taxon>
        <taxon>Marasmiineae</taxon>
        <taxon>Physalacriaceae</taxon>
        <taxon>Flammulina</taxon>
    </lineage>
</organism>
<keyword id="KW-0134">Cell wall</keyword>
<keyword id="KW-1015">Disulfide bond</keyword>
<keyword id="KW-0325">Glycoprotein</keyword>
<keyword id="KW-0964">Secreted</keyword>
<keyword id="KW-0732">Signal</keyword>
<proteinExistence type="evidence at transcript level"/>
<accession>A0A1I9QLC8</accession>